<dbReference type="EMBL" id="D86284">
    <property type="protein sequence ID" value="BAA23304.1"/>
    <property type="molecule type" value="Genomic_RNA"/>
</dbReference>
<dbReference type="SMR" id="O39733"/>
<dbReference type="GO" id="GO:0044166">
    <property type="term" value="C:host cell endoplasmic reticulum lumen"/>
    <property type="evidence" value="ECO:0007669"/>
    <property type="project" value="UniProtKB-SubCell"/>
</dbReference>
<dbReference type="GO" id="GO:0039621">
    <property type="term" value="C:T=13 icosahedral viral capsid"/>
    <property type="evidence" value="ECO:0007669"/>
    <property type="project" value="UniProtKB-UniRule"/>
</dbReference>
<dbReference type="GO" id="GO:0039624">
    <property type="term" value="C:viral outer capsid"/>
    <property type="evidence" value="ECO:0007669"/>
    <property type="project" value="UniProtKB-UniRule"/>
</dbReference>
<dbReference type="GO" id="GO:0046872">
    <property type="term" value="F:metal ion binding"/>
    <property type="evidence" value="ECO:0007669"/>
    <property type="project" value="UniProtKB-KW"/>
</dbReference>
<dbReference type="FunFam" id="2.60.120.800:FF:000001">
    <property type="entry name" value="Outer capsid glycoprotein VP7"/>
    <property type="match status" value="1"/>
</dbReference>
<dbReference type="Gene3D" id="3.40.50.11130">
    <property type="entry name" value="Glycoprotein VP7, domain 1"/>
    <property type="match status" value="1"/>
</dbReference>
<dbReference type="Gene3D" id="2.60.120.800">
    <property type="entry name" value="Rotavirus outer-layer protein VP7, domain 2"/>
    <property type="match status" value="1"/>
</dbReference>
<dbReference type="HAMAP" id="MF_04130">
    <property type="entry name" value="Rota_VP7"/>
    <property type="match status" value="1"/>
</dbReference>
<dbReference type="HAMAP" id="MF_04131">
    <property type="entry name" value="Rota_VP7_A"/>
    <property type="match status" value="1"/>
</dbReference>
<dbReference type="InterPro" id="IPR001963">
    <property type="entry name" value="VP7"/>
</dbReference>
<dbReference type="InterPro" id="IPR042207">
    <property type="entry name" value="VP7_1"/>
</dbReference>
<dbReference type="InterPro" id="IPR042210">
    <property type="entry name" value="VP7_2"/>
</dbReference>
<dbReference type="Pfam" id="PF00434">
    <property type="entry name" value="VP7"/>
    <property type="match status" value="1"/>
</dbReference>
<proteinExistence type="inferred from homology"/>
<organism>
    <name type="scientific">Rotavirus A (strain RVA/Human/Japan/YO/1977/G3P1A[8])</name>
    <name type="common">RV-A</name>
    <dbReference type="NCBI Taxonomy" id="578832"/>
    <lineage>
        <taxon>Viruses</taxon>
        <taxon>Riboviria</taxon>
        <taxon>Orthornavirae</taxon>
        <taxon>Duplornaviricota</taxon>
        <taxon>Resentoviricetes</taxon>
        <taxon>Reovirales</taxon>
        <taxon>Sedoreoviridae</taxon>
        <taxon>Rotavirus</taxon>
        <taxon>Rotavirus A</taxon>
    </lineage>
</organism>
<comment type="function">
    <text evidence="2">Calcium-binding protein that interacts with rotavirus cell receptors once the initial attachment by VP4 has been achieved. Rotavirus attachment and entry into the host cell probably involves multiple sequential contacts between the outer capsid proteins VP4 and VP7, and the cell receptors. Following entry into the host cell, low intracellular or intravesicular Ca(2+) concentration probably causes the calcium-stabilized VP7 trimers to dissociate from the virion. This step is probably necessary for the membrane-disrupting entry step and the release of VP4, which is locked onto the virion by VP7.</text>
</comment>
<comment type="subunit">
    <text evidence="2">Homotrimer; disulfide-linked. 2 Ca(2+) ions bound at each subunit interface in the trimer hold the trimer together. Interacts with the intermediate capsid protein VP6. Interacts with the outer capsid protein VP5*.</text>
</comment>
<comment type="subcellular location">
    <subcellularLocation>
        <location evidence="2">Virion</location>
    </subcellularLocation>
    <subcellularLocation>
        <location evidence="2">Host endoplasmic reticulum lumen</location>
    </subcellularLocation>
    <text evidence="2">The outer layer contains 780 copies of VP7, grouped as 260 trimers. Immature double-layered particles assembled in the cytoplasm bud across the membrane of the endoplasmic reticulum, acquiring during this process a transient lipid membrane that is modified with the ER resident viral glycoproteins NSP4 and VP7; these enveloped particles also contain VP4. As the particles move towards the interior of the ER cisternae, the transient lipid membrane and the non-structural protein NSP4 are lost, while the virus surface proteins VP4 and VP7 rearrange to form the outermost virus protein layer, yielding mature infectious triple-layered particles.</text>
</comment>
<comment type="alternative products">
    <event type="alternative initiation"/>
    <isoform>
        <id>O39733-1</id>
        <name>1</name>
        <sequence type="displayed"/>
    </isoform>
    <isoform>
        <id>O39733-2</id>
        <name>2</name>
        <sequence type="described" ref="VSP_038625"/>
    </isoform>
</comment>
<comment type="PTM">
    <text evidence="2">N-glycosylated.</text>
</comment>
<comment type="PTM">
    <text evidence="2">The N-terminus is blocked possibly by pyroglutamic acid.</text>
</comment>
<comment type="miscellaneous">
    <text evidence="2">Some rotavirus strains are neuraminidase-sensitive and require sialic acid to attach to the cell surface. Some rotavirus strains are integrin-dependent. Some rotavirus strains depend on ganglioside for their entry into the host cell. Hsp70 also seems to be involved in the entry of some strains.</text>
</comment>
<comment type="miscellaneous">
    <text evidence="2">In group A rotaviruses, VP7 defines the G serotype.</text>
</comment>
<comment type="miscellaneous">
    <molecule>Isoform 2</molecule>
    <text evidence="3">Produced by alternative initiation at Met-30 of isoform 1.</text>
</comment>
<comment type="similarity">
    <text evidence="2">Belongs to the rotavirus VP7 family.</text>
</comment>
<keyword id="KW-0024">Alternative initiation</keyword>
<keyword id="KW-0106">Calcium</keyword>
<keyword id="KW-0167">Capsid protein</keyword>
<keyword id="KW-1015">Disulfide bond</keyword>
<keyword id="KW-0325">Glycoprotein</keyword>
<keyword id="KW-1038">Host endoplasmic reticulum</keyword>
<keyword id="KW-0945">Host-virus interaction</keyword>
<keyword id="KW-0479">Metal-binding</keyword>
<keyword id="KW-1152">Outer capsid protein</keyword>
<keyword id="KW-0732">Signal</keyword>
<keyword id="KW-1146">T=13 icosahedral capsid protein</keyword>
<keyword id="KW-0946">Virion</keyword>
<protein>
    <recommendedName>
        <fullName evidence="2">Outer capsid glycoprotein VP7</fullName>
    </recommendedName>
</protein>
<name>VP7_ROTYO</name>
<reference key="1">
    <citation type="journal article" date="1997" name="Arch. Virol.">
        <title>Genetic variation in the VP7 gene of human rotavirus serotype 3 (G3 type) isolated in China and Japan.</title>
        <authorList>
            <person name="Wen L."/>
            <person name="Nakayama M."/>
            <person name="Yamanishi Y."/>
            <person name="Nishio O."/>
            <person name="Fang Z.Y."/>
            <person name="Nakagomi O."/>
            <person name="Araki K."/>
            <person name="Nishimura S."/>
            <person name="Hasegawa A."/>
            <person name="Muller W.E."/>
            <person name="Ushijima H."/>
        </authorList>
    </citation>
    <scope>NUCLEOTIDE SEQUENCE [GENOMIC RNA]</scope>
</reference>
<evidence type="ECO:0000255" key="1"/>
<evidence type="ECO:0000255" key="2">
    <source>
        <dbReference type="HAMAP-Rule" id="MF_04131"/>
    </source>
</evidence>
<evidence type="ECO:0000305" key="3"/>
<sequence length="326" mass="37185">MYGIEYTTVLTFLISVILLNYVLKSLTRIMDFIIYRFLLIIVILSPFLNAQNYGINLPITGSMDTPYTNPTREEVFLTSTLCLYYPTEAATEINDNSWEDTLSQLFLTKGWPTGSIYFKAYTNIASFSVDPQLYCDYNLVLMKYDATLQLDMSELADLLLNEWLCNPMDITLYYYQQTDEANKWISMGSSCTIKVCPLNTQTLGIGCLTTDTNTFEEVATADKLVITDVVDGVNHKLNVTTNTCTIRNCKKLGPRENVAVIQVGGSDILDITADPTTAPQTERMMRVNWKKWWQVFYTIVDYVNQIVQAMSKRSRSLNSAAFYYRV</sequence>
<feature type="signal peptide" evidence="2">
    <location>
        <begin position="1"/>
        <end position="50"/>
    </location>
</feature>
<feature type="chain" id="PRO_0000369116" description="Outer capsid glycoprotein VP7" evidence="2">
    <location>
        <begin position="51"/>
        <end position="326"/>
    </location>
</feature>
<feature type="region of interest" description="CNP motif; interaction with ITGAV/ITGB3" evidence="2">
    <location>
        <begin position="165"/>
        <end position="167"/>
    </location>
</feature>
<feature type="region of interest" description="GPR motif; interaction with ITGAX/ITGB2" evidence="2">
    <location>
        <begin position="253"/>
        <end position="255"/>
    </location>
</feature>
<feature type="binding site" evidence="2">
    <location>
        <position position="95"/>
    </location>
    <ligand>
        <name>Ca(2+)</name>
        <dbReference type="ChEBI" id="CHEBI:29108"/>
        <label>1</label>
    </ligand>
</feature>
<feature type="binding site" evidence="2">
    <location>
        <position position="177"/>
    </location>
    <ligand>
        <name>Ca(2+)</name>
        <dbReference type="ChEBI" id="CHEBI:29108"/>
        <label>2</label>
    </ligand>
</feature>
<feature type="binding site" evidence="2">
    <location>
        <position position="206"/>
    </location>
    <ligand>
        <name>Ca(2+)</name>
        <dbReference type="ChEBI" id="CHEBI:29108"/>
        <label>1</label>
    </ligand>
</feature>
<feature type="binding site" evidence="2">
    <location>
        <position position="214"/>
    </location>
    <ligand>
        <name>Ca(2+)</name>
        <dbReference type="ChEBI" id="CHEBI:29108"/>
        <label>1</label>
    </ligand>
</feature>
<feature type="binding site" evidence="2">
    <location>
        <position position="216"/>
    </location>
    <ligand>
        <name>Ca(2+)</name>
        <dbReference type="ChEBI" id="CHEBI:29108"/>
        <label>1</label>
    </ligand>
</feature>
<feature type="binding site" evidence="2">
    <location>
        <position position="228"/>
    </location>
    <ligand>
        <name>Ca(2+)</name>
        <dbReference type="ChEBI" id="CHEBI:29108"/>
        <label>2</label>
    </ligand>
</feature>
<feature type="binding site" evidence="2">
    <location>
        <position position="229"/>
    </location>
    <ligand>
        <name>Ca(2+)</name>
        <dbReference type="ChEBI" id="CHEBI:29108"/>
        <label>2</label>
    </ligand>
</feature>
<feature type="binding site" evidence="2">
    <location>
        <position position="231"/>
    </location>
    <ligand>
        <name>Ca(2+)</name>
        <dbReference type="ChEBI" id="CHEBI:29108"/>
        <label>2</label>
    </ligand>
</feature>
<feature type="binding site" evidence="2">
    <location>
        <position position="301"/>
    </location>
    <ligand>
        <name>Ca(2+)</name>
        <dbReference type="ChEBI" id="CHEBI:29108"/>
        <label>2</label>
    </ligand>
</feature>
<feature type="glycosylation site" description="N-linked (GlcNAc...) asparagine; by host" evidence="1">
    <location>
        <position position="238"/>
    </location>
</feature>
<feature type="disulfide bond" evidence="2">
    <location>
        <begin position="82"/>
        <end position="135"/>
    </location>
</feature>
<feature type="disulfide bond" evidence="2">
    <location>
        <begin position="165"/>
        <end position="249"/>
    </location>
</feature>
<feature type="disulfide bond" evidence="2">
    <location>
        <begin position="191"/>
        <end position="244"/>
    </location>
</feature>
<feature type="disulfide bond" evidence="2">
    <location>
        <begin position="196"/>
        <end position="207"/>
    </location>
</feature>
<feature type="splice variant" id="VSP_038625" description="In isoform 2." evidence="3">
    <location>
        <begin position="1"/>
        <end position="29"/>
    </location>
</feature>
<organismHost>
    <name type="scientific">Homo sapiens</name>
    <name type="common">Human</name>
    <dbReference type="NCBI Taxonomy" id="9606"/>
</organismHost>
<accession>O39733</accession>